<protein>
    <recommendedName>
        <fullName>Putative adenine deaminase BH0637</fullName>
        <shortName>Adenase</shortName>
        <shortName>Adenine aminase</shortName>
        <ecNumber>3.5.4.2</ecNumber>
    </recommendedName>
</protein>
<keyword id="KW-0378">Hydrolase</keyword>
<keyword id="KW-1185">Reference proteome</keyword>
<evidence type="ECO:0000305" key="1"/>
<feature type="chain" id="PRO_0000142446" description="Putative adenine deaminase BH0637">
    <location>
        <begin position="1"/>
        <end position="581"/>
    </location>
</feature>
<sequence length="581" mass="66324">MCEQKYRWTKKQIRQQLAVVRGEMAPTLVLKNATYLNSVRGKWLDANIWIYQDRIVYVGQDMPAKLDDETEVVDCGQQVIVPGYIEHHAHPFQLYNPHSFANYAAAMGTTTLINDNLMFFLALEKKKALSMIESLDELPSSMYWWCRYDPQTEMNDEEGHFLNSKIKEWLEHPLVVQGGELTSWPKVITGDDGILHWMQETRRLRKPIEGHFPGASEKTLTQMSLLGVTSDHEAMTGEEVIRRLDLGYMTSLRHSSIRSDLAKILREMKELGIDDFSRCMLTTDGSPPSFYEQGIMDRLIKIALDEGIPPKDAYGMATYYVARYYGLDYELGMIAPGRIAHLNFLDNVFNPVPTSVLAKGQWVVRDGQRYGSDSVFPWEDFGMKRLTIDWDLSVDELHFSMPMGIELVNSVILKPYQVSVEASRDTLAEDHDECFFLLLDKHGKWKIPTMIKGFAKKVSGLASSFSTTGDIILIGKCIQDMIVAFNALKQQGGGIVLVENGEVISNIPLEIMGLLSSKPMEEVMEEEKKFVKALRERGYEHDDPIYSLLFFSSTHLPYIRVTQRGIYDVHKKTVLFPSIMR</sequence>
<dbReference type="EC" id="3.5.4.2"/>
<dbReference type="EMBL" id="BA000004">
    <property type="protein sequence ID" value="BAB04356.1"/>
    <property type="molecule type" value="Genomic_DNA"/>
</dbReference>
<dbReference type="PIR" id="E83729">
    <property type="entry name" value="E83729"/>
</dbReference>
<dbReference type="RefSeq" id="WP_010896813.1">
    <property type="nucleotide sequence ID" value="NC_002570.2"/>
</dbReference>
<dbReference type="SMR" id="Q9KF49"/>
<dbReference type="STRING" id="272558.gene:10726511"/>
<dbReference type="KEGG" id="bha:BH0637"/>
<dbReference type="eggNOG" id="COG1001">
    <property type="taxonomic scope" value="Bacteria"/>
</dbReference>
<dbReference type="HOGENOM" id="CLU_027935_0_0_9"/>
<dbReference type="OrthoDB" id="9775607at2"/>
<dbReference type="Proteomes" id="UP000001258">
    <property type="component" value="Chromosome"/>
</dbReference>
<dbReference type="GO" id="GO:0000034">
    <property type="term" value="F:adenine deaminase activity"/>
    <property type="evidence" value="ECO:0007669"/>
    <property type="project" value="UniProtKB-EC"/>
</dbReference>
<dbReference type="GO" id="GO:0006146">
    <property type="term" value="P:adenine catabolic process"/>
    <property type="evidence" value="ECO:0007669"/>
    <property type="project" value="InterPro"/>
</dbReference>
<dbReference type="CDD" id="cd01295">
    <property type="entry name" value="AdeC"/>
    <property type="match status" value="1"/>
</dbReference>
<dbReference type="Gene3D" id="3.20.20.140">
    <property type="entry name" value="Metal-dependent hydrolases"/>
    <property type="match status" value="1"/>
</dbReference>
<dbReference type="Gene3D" id="2.30.40.10">
    <property type="entry name" value="Urease, subunit C, domain 1"/>
    <property type="match status" value="1"/>
</dbReference>
<dbReference type="InterPro" id="IPR006679">
    <property type="entry name" value="Adenine_deam"/>
</dbReference>
<dbReference type="InterPro" id="IPR026912">
    <property type="entry name" value="Adenine_deam_C"/>
</dbReference>
<dbReference type="InterPro" id="IPR006680">
    <property type="entry name" value="Amidohydro-rel"/>
</dbReference>
<dbReference type="InterPro" id="IPR011059">
    <property type="entry name" value="Metal-dep_hydrolase_composite"/>
</dbReference>
<dbReference type="InterPro" id="IPR032466">
    <property type="entry name" value="Metal_Hydrolase"/>
</dbReference>
<dbReference type="PANTHER" id="PTHR11113:SF6">
    <property type="entry name" value="ADENINE DEAMINASE YERA-RELATED"/>
    <property type="match status" value="1"/>
</dbReference>
<dbReference type="PANTHER" id="PTHR11113">
    <property type="entry name" value="N-ACETYLGLUCOSAMINE-6-PHOSPHATE DEACETYLASE"/>
    <property type="match status" value="1"/>
</dbReference>
<dbReference type="Pfam" id="PF13382">
    <property type="entry name" value="Adenine_deam_C"/>
    <property type="match status" value="1"/>
</dbReference>
<dbReference type="Pfam" id="PF01979">
    <property type="entry name" value="Amidohydro_1"/>
    <property type="match status" value="1"/>
</dbReference>
<dbReference type="SUPFAM" id="SSF51338">
    <property type="entry name" value="Composite domain of metallo-dependent hydrolases"/>
    <property type="match status" value="1"/>
</dbReference>
<dbReference type="SUPFAM" id="SSF51556">
    <property type="entry name" value="Metallo-dependent hydrolases"/>
    <property type="match status" value="1"/>
</dbReference>
<name>Y637_HALH5</name>
<proteinExistence type="inferred from homology"/>
<organism>
    <name type="scientific">Halalkalibacterium halodurans (strain ATCC BAA-125 / DSM 18197 / FERM 7344 / JCM 9153 / C-125)</name>
    <name type="common">Bacillus halodurans</name>
    <dbReference type="NCBI Taxonomy" id="272558"/>
    <lineage>
        <taxon>Bacteria</taxon>
        <taxon>Bacillati</taxon>
        <taxon>Bacillota</taxon>
        <taxon>Bacilli</taxon>
        <taxon>Bacillales</taxon>
        <taxon>Bacillaceae</taxon>
        <taxon>Halalkalibacterium (ex Joshi et al. 2022)</taxon>
    </lineage>
</organism>
<comment type="catalytic activity">
    <reaction>
        <text>adenine + H2O + H(+) = hypoxanthine + NH4(+)</text>
        <dbReference type="Rhea" id="RHEA:23688"/>
        <dbReference type="ChEBI" id="CHEBI:15377"/>
        <dbReference type="ChEBI" id="CHEBI:15378"/>
        <dbReference type="ChEBI" id="CHEBI:16708"/>
        <dbReference type="ChEBI" id="CHEBI:17368"/>
        <dbReference type="ChEBI" id="CHEBI:28938"/>
        <dbReference type="EC" id="3.5.4.2"/>
    </reaction>
</comment>
<comment type="similarity">
    <text evidence="1">Belongs to the metallo-dependent hydrolases superfamily. Adenine deaminase family.</text>
</comment>
<gene>
    <name type="ordered locus">BH0637</name>
</gene>
<accession>Q9KF49</accession>
<reference key="1">
    <citation type="journal article" date="2000" name="Nucleic Acids Res.">
        <title>Complete genome sequence of the alkaliphilic bacterium Bacillus halodurans and genomic sequence comparison with Bacillus subtilis.</title>
        <authorList>
            <person name="Takami H."/>
            <person name="Nakasone K."/>
            <person name="Takaki Y."/>
            <person name="Maeno G."/>
            <person name="Sasaki R."/>
            <person name="Masui N."/>
            <person name="Fuji F."/>
            <person name="Hirama C."/>
            <person name="Nakamura Y."/>
            <person name="Ogasawara N."/>
            <person name="Kuhara S."/>
            <person name="Horikoshi K."/>
        </authorList>
    </citation>
    <scope>NUCLEOTIDE SEQUENCE [LARGE SCALE GENOMIC DNA]</scope>
    <source>
        <strain>ATCC BAA-125 / DSM 18197 / FERM 7344 / JCM 9153 / C-125</strain>
    </source>
</reference>